<comment type="function">
    <text evidence="2 3">Required for processing of 20S pre-rRNA precursor and biogenesis of 40S ribosomal subunits. May be required for trophinin-dependent regulation of cell adhesion during implantation of human embryos.</text>
</comment>
<comment type="subunit">
    <text>Binds trophinin, tastin and cytokeratins.</text>
</comment>
<comment type="interaction">
    <interactant intactId="EBI-358049">
        <id>Q13895</id>
    </interactant>
    <interactant intactId="EBI-745226">
        <id>Q13155</id>
        <label>AIMP2</label>
    </interactant>
    <organismsDiffer>false</organismsDiffer>
    <experiments>5</experiments>
</comment>
<comment type="interaction">
    <interactant intactId="EBI-358049">
        <id>Q13895</id>
    </interactant>
    <interactant intactId="EBI-746752">
        <id>Q9Y2J4</id>
        <label>AMOTL2</label>
    </interactant>
    <organismsDiffer>false</organismsDiffer>
    <experiments>3</experiments>
</comment>
<comment type="interaction">
    <interactant intactId="EBI-358049">
        <id>Q13895</id>
    </interactant>
    <interactant intactId="EBI-356231">
        <id>P06576</id>
        <label>ATP5F1B</label>
    </interactant>
    <organismsDiffer>false</organismsDiffer>
    <experiments>3</experiments>
</comment>
<comment type="interaction">
    <interactant intactId="EBI-358049">
        <id>Q13895</id>
    </interactant>
    <interactant intactId="EBI-4400025">
        <id>Q9Y2T1</id>
        <label>AXIN2</label>
    </interactant>
    <organismsDiffer>false</organismsDiffer>
    <experiments>3</experiments>
</comment>
<comment type="interaction">
    <interactant intactId="EBI-358049">
        <id>Q13895</id>
    </interactant>
    <interactant intactId="EBI-10181188">
        <id>Q8N7W2-2</id>
        <label>BEND7</label>
    </interactant>
    <organismsDiffer>false</organismsDiffer>
    <experiments>8</experiments>
</comment>
<comment type="interaction">
    <interactant intactId="EBI-358049">
        <id>Q13895</id>
    </interactant>
    <interactant intactId="EBI-12123320">
        <id>Q12934-2</id>
        <label>BFSP1</label>
    </interactant>
    <organismsDiffer>false</organismsDiffer>
    <experiments>3</experiments>
</comment>
<comment type="interaction">
    <interactant intactId="EBI-358049">
        <id>Q13895</id>
    </interactant>
    <interactant intactId="EBI-711810">
        <id>O14503</id>
        <label>BHLHE40</label>
    </interactant>
    <organismsDiffer>false</organismsDiffer>
    <experiments>3</experiments>
</comment>
<comment type="interaction">
    <interactant intactId="EBI-358049">
        <id>Q13895</id>
    </interactant>
    <interactant intactId="EBI-946029">
        <id>Q6P1W5</id>
        <label>C1orf94</label>
    </interactant>
    <organismsDiffer>false</organismsDiffer>
    <experiments>3</experiments>
</comment>
<comment type="interaction">
    <interactant intactId="EBI-358049">
        <id>Q13895</id>
    </interactant>
    <interactant intactId="EBI-11532021">
        <id>P20807-4</id>
        <label>CAPN3</label>
    </interactant>
    <organismsDiffer>false</organismsDiffer>
    <experiments>3</experiments>
</comment>
<comment type="interaction">
    <interactant intactId="EBI-358049">
        <id>Q13895</id>
    </interactant>
    <interactant intactId="EBI-6859557">
        <id>O14958</id>
        <label>CASQ2</label>
    </interactant>
    <organismsDiffer>false</organismsDiffer>
    <experiments>3</experiments>
</comment>
<comment type="interaction">
    <interactant intactId="EBI-358049">
        <id>Q13895</id>
    </interactant>
    <interactant intactId="EBI-12836558">
        <id>Q5BKX8</id>
        <label>CAVIN4</label>
    </interactant>
    <organismsDiffer>false</organismsDiffer>
    <experiments>3</experiments>
</comment>
<comment type="interaction">
    <interactant intactId="EBI-358049">
        <id>Q13895</id>
    </interactant>
    <interactant intactId="EBI-10171570">
        <id>Q68D86</id>
        <label>CCDC102B</label>
    </interactant>
    <organismsDiffer>false</organismsDiffer>
    <experiments>6</experiments>
</comment>
<comment type="interaction">
    <interactant intactId="EBI-358049">
        <id>Q13895</id>
    </interactant>
    <interactant intactId="EBI-10171416">
        <id>Q96JN2-2</id>
        <label>CCDC136</label>
    </interactant>
    <organismsDiffer>false</organismsDiffer>
    <experiments>5</experiments>
</comment>
<comment type="interaction">
    <interactant intactId="EBI-358049">
        <id>Q13895</id>
    </interactant>
    <interactant intactId="EBI-396137">
        <id>Q9UJX2</id>
        <label>CDC23</label>
    </interactant>
    <organismsDiffer>false</organismsDiffer>
    <experiments>5</experiments>
</comment>
<comment type="interaction">
    <interactant intactId="EBI-358049">
        <id>Q13895</id>
    </interactant>
    <interactant intactId="EBI-5278764">
        <id>Q96GN5</id>
        <label>CDCA7L</label>
    </interactant>
    <organismsDiffer>false</organismsDiffer>
    <experiments>5</experiments>
</comment>
<comment type="interaction">
    <interactant intactId="EBI-358049">
        <id>Q13895</id>
    </interactant>
    <interactant intactId="EBI-744115">
        <id>Q9C0F1</id>
        <label>CEP44</label>
    </interactant>
    <organismsDiffer>false</organismsDiffer>
    <experiments>5</experiments>
</comment>
<comment type="interaction">
    <interactant intactId="EBI-358049">
        <id>Q13895</id>
    </interactant>
    <interactant intactId="EBI-10181988">
        <id>Q8IYX8-2</id>
        <label>CEP57L1</label>
    </interactant>
    <organismsDiffer>false</organismsDiffer>
    <experiments>5</experiments>
</comment>
<comment type="interaction">
    <interactant intactId="EBI-358049">
        <id>Q13895</id>
    </interactant>
    <interactant intactId="EBI-739624">
        <id>Q8NHQ1</id>
        <label>CEP70</label>
    </interactant>
    <organismsDiffer>false</organismsDiffer>
    <experiments>8</experiments>
</comment>
<comment type="interaction">
    <interactant intactId="EBI-358049">
        <id>Q13895</id>
    </interactant>
    <interactant intactId="EBI-945751">
        <id>P38432</id>
        <label>COIL</label>
    </interactant>
    <organismsDiffer>false</organismsDiffer>
    <experiments>11</experiments>
</comment>
<comment type="interaction">
    <interactant intactId="EBI-358049">
        <id>Q13895</id>
    </interactant>
    <interactant intactId="EBI-746012">
        <id>Q92841</id>
        <label>DDX17</label>
    </interactant>
    <organismsDiffer>false</organismsDiffer>
    <experiments>6</experiments>
</comment>
<comment type="interaction">
    <interactant intactId="EBI-358049">
        <id>Q13895</id>
    </interactant>
    <interactant intactId="EBI-10174653">
        <id>Q8NF50-2</id>
        <label>DOCK8</label>
    </interactant>
    <organismsDiffer>false</organismsDiffer>
    <experiments>5</experiments>
</comment>
<comment type="interaction">
    <interactant intactId="EBI-358049">
        <id>Q13895</id>
    </interactant>
    <interactant intactId="EBI-748732">
        <id>Q56P03</id>
        <label>EAPP</label>
    </interactant>
    <organismsDiffer>false</organismsDiffer>
    <experiments>3</experiments>
</comment>
<comment type="interaction">
    <interactant intactId="EBI-358049">
        <id>Q13895</id>
    </interactant>
    <interactant intactId="EBI-489887">
        <id>P50402</id>
        <label>EMD</label>
    </interactant>
    <organismsDiffer>false</organismsDiffer>
    <experiments>6</experiments>
</comment>
<comment type="interaction">
    <interactant intactId="EBI-358049">
        <id>Q13895</id>
    </interactant>
    <interactant intactId="EBI-375576">
        <id>Q12929</id>
        <label>EPS8</label>
    </interactant>
    <organismsDiffer>false</organismsDiffer>
    <experiments>3</experiments>
</comment>
<comment type="interaction">
    <interactant intactId="EBI-358049">
        <id>Q13895</id>
    </interactant>
    <interactant intactId="EBI-80371">
        <id>Q15303</id>
        <label>ERBB4</label>
    </interactant>
    <organismsDiffer>false</organismsDiffer>
    <experiments>3</experiments>
</comment>
<comment type="interaction">
    <interactant intactId="EBI-358049">
        <id>Q13895</id>
    </interactant>
    <interactant intactId="EBI-12958227">
        <id>Q86W67</id>
        <label>FAM228A</label>
    </interactant>
    <organismsDiffer>false</organismsDiffer>
    <experiments>3</experiments>
</comment>
<comment type="interaction">
    <interactant intactId="EBI-358049">
        <id>Q13895</id>
    </interactant>
    <interactant intactId="EBI-10175124">
        <id>Q8IZU0</id>
        <label>FAM9B</label>
    </interactant>
    <organismsDiffer>false</organismsDiffer>
    <experiments>5</experiments>
</comment>
<comment type="interaction">
    <interactant intactId="EBI-358049">
        <id>Q13895</id>
    </interactant>
    <interactant intactId="EBI-11977403">
        <id>A0A0C3SFZ9</id>
        <label>FCHO1</label>
    </interactant>
    <organismsDiffer>false</organismsDiffer>
    <experiments>3</experiments>
</comment>
<comment type="interaction">
    <interactant intactId="EBI-358049">
        <id>Q13895</id>
    </interactant>
    <interactant intactId="EBI-10172181">
        <id>Q53SE7</id>
        <label>FLJ13057</label>
    </interactant>
    <organismsDiffer>false</organismsDiffer>
    <experiments>3</experiments>
</comment>
<comment type="interaction">
    <interactant intactId="EBI-358049">
        <id>Q13895</id>
    </interactant>
    <interactant intactId="EBI-11022345">
        <id>P51114-2</id>
        <label>FXR1</label>
    </interactant>
    <organismsDiffer>false</organismsDiffer>
    <experiments>3</experiments>
</comment>
<comment type="interaction">
    <interactant intactId="EBI-358049">
        <id>Q13895</id>
    </interactant>
    <interactant intactId="EBI-740459">
        <id>P51116</id>
        <label>FXR2</label>
    </interactant>
    <organismsDiffer>false</organismsDiffer>
    <experiments>8</experiments>
</comment>
<comment type="interaction">
    <interactant intactId="EBI-358049">
        <id>Q13895</id>
    </interactant>
    <interactant intactId="EBI-1052570">
        <id>O95995</id>
        <label>GAS8</label>
    </interactant>
    <organismsDiffer>false</organismsDiffer>
    <experiments>3</experiments>
</comment>
<comment type="interaction">
    <interactant intactId="EBI-358049">
        <id>Q13895</id>
    </interactant>
    <interactant intactId="EBI-2548508">
        <id>Q96IK5</id>
        <label>GMCL1</label>
    </interactant>
    <organismsDiffer>false</organismsDiffer>
    <experiments>5</experiments>
</comment>
<comment type="interaction">
    <interactant intactId="EBI-358049">
        <id>Q13895</id>
    </interactant>
    <interactant intactId="EBI-618309">
        <id>Q08379</id>
        <label>GOLGA2</label>
    </interactant>
    <organismsDiffer>false</organismsDiffer>
    <experiments>8</experiments>
</comment>
<comment type="interaction">
    <interactant intactId="EBI-358049">
        <id>Q13895</id>
    </interactant>
    <interactant intactId="EBI-5916454">
        <id>A6NEM1</id>
        <label>GOLGA6L9</label>
    </interactant>
    <organismsDiffer>false</organismsDiffer>
    <experiments>3</experiments>
</comment>
<comment type="interaction">
    <interactant intactId="EBI-358049">
        <id>Q13895</id>
    </interactant>
    <interactant intactId="EBI-717919">
        <id>Q4V328</id>
        <label>GRIPAP1</label>
    </interactant>
    <organismsDiffer>false</organismsDiffer>
    <experiments>3</experiments>
</comment>
<comment type="interaction">
    <interactant intactId="EBI-358049">
        <id>Q13895</id>
    </interactant>
    <interactant intactId="EBI-2549423">
        <id>Q6NT76</id>
        <label>HMBOX1</label>
    </interactant>
    <organismsDiffer>false</organismsDiffer>
    <experiments>8</experiments>
</comment>
<comment type="interaction">
    <interactant intactId="EBI-358049">
        <id>Q13895</id>
    </interactant>
    <interactant intactId="EBI-740641">
        <id>Q9NP66</id>
        <label>HMG20A</label>
    </interactant>
    <organismsDiffer>false</organismsDiffer>
    <experiments>3</experiments>
</comment>
<comment type="interaction">
    <interactant intactId="EBI-358049">
        <id>Q13895</id>
    </interactant>
    <interactant intactId="EBI-10961706">
        <id>Q96ED9-2</id>
        <label>HOOK2</label>
    </interactant>
    <organismsDiffer>false</organismsDiffer>
    <experiments>3</experiments>
</comment>
<comment type="interaction">
    <interactant intactId="EBI-358049">
        <id>Q13895</id>
    </interactant>
    <interactant intactId="EBI-7116203">
        <id>O75031</id>
        <label>HSF2BP</label>
    </interactant>
    <organismsDiffer>false</organismsDiffer>
    <experiments>3</experiments>
</comment>
<comment type="interaction">
    <interactant intactId="EBI-358049">
        <id>Q13895</id>
    </interactant>
    <interactant intactId="EBI-745305">
        <id>Q13422</id>
        <label>IKZF1</label>
    </interactant>
    <organismsDiffer>false</organismsDiffer>
    <experiments>5</experiments>
</comment>
<comment type="interaction">
    <interactant intactId="EBI-358049">
        <id>Q13895</id>
    </interactant>
    <interactant intactId="EBI-11522367">
        <id>Q13422-7</id>
        <label>IKZF1</label>
    </interactant>
    <organismsDiffer>false</organismsDiffer>
    <experiments>3</experiments>
</comment>
<comment type="interaction">
    <interactant intactId="EBI-358049">
        <id>Q13895</id>
    </interactant>
    <interactant intactId="EBI-747204">
        <id>Q9UKT9</id>
        <label>IKZF3</label>
    </interactant>
    <organismsDiffer>false</organismsDiffer>
    <experiments>3</experiments>
</comment>
<comment type="interaction">
    <interactant intactId="EBI-358049">
        <id>Q13895</id>
    </interactant>
    <interactant intactId="EBI-17181882">
        <id>O75564-2</id>
        <label>JRK</label>
    </interactant>
    <organismsDiffer>false</organismsDiffer>
    <experiments>3</experiments>
</comment>
<comment type="interaction">
    <interactant intactId="EBI-358049">
        <id>Q13895</id>
    </interactant>
    <interactant intactId="EBI-743591">
        <id>Q9BW62</id>
        <label>KATNAL1</label>
    </interactant>
    <organismsDiffer>false</organismsDiffer>
    <experiments>3</experiments>
</comment>
<comment type="interaction">
    <interactant intactId="EBI-358049">
        <id>Q13895</id>
    </interactant>
    <interactant intactId="EBI-3437878">
        <id>Q86T90</id>
        <label>KIAA1328</label>
    </interactant>
    <organismsDiffer>false</organismsDiffer>
    <experiments>3</experiments>
</comment>
<comment type="interaction">
    <interactant intactId="EBI-358049">
        <id>Q13895</id>
    </interactant>
    <interactant intactId="EBI-14069005">
        <id>Q9BVG8-5</id>
        <label>KIFC3</label>
    </interactant>
    <organismsDiffer>false</organismsDiffer>
    <experiments>5</experiments>
</comment>
<comment type="interaction">
    <interactant intactId="EBI-358049">
        <id>Q13895</id>
    </interactant>
    <interactant intactId="EBI-746999">
        <id>O95198</id>
        <label>KLHL2</label>
    </interactant>
    <organismsDiffer>false</organismsDiffer>
    <experiments>3</experiments>
</comment>
<comment type="interaction">
    <interactant intactId="EBI-358049">
        <id>Q13895</id>
    </interactant>
    <interactant intactId="EBI-6426464">
        <id>Q8WZ60</id>
        <label>KLHL6</label>
    </interactant>
    <organismsDiffer>false</organismsDiffer>
    <experiments>3</experiments>
</comment>
<comment type="interaction">
    <interactant intactId="EBI-358049">
        <id>Q13895</id>
    </interactant>
    <interactant intactId="EBI-948001">
        <id>Q15323</id>
        <label>KRT31</label>
    </interactant>
    <organismsDiffer>false</organismsDiffer>
    <experiments>3</experiments>
</comment>
<comment type="interaction">
    <interactant intactId="EBI-358049">
        <id>Q13895</id>
    </interactant>
    <interactant intactId="EBI-10171697">
        <id>Q6A162</id>
        <label>KRT40</label>
    </interactant>
    <organismsDiffer>false</organismsDiffer>
    <experiments>8</experiments>
</comment>
<comment type="interaction">
    <interactant intactId="EBI-358049">
        <id>Q13895</id>
    </interactant>
    <interactant intactId="EBI-10172150">
        <id>P60370</id>
        <label>KRTAP10-5</label>
    </interactant>
    <organismsDiffer>false</organismsDiffer>
    <experiments>5</experiments>
</comment>
<comment type="interaction">
    <interactant intactId="EBI-358049">
        <id>Q13895</id>
    </interactant>
    <interactant intactId="EBI-10172290">
        <id>P60409</id>
        <label>KRTAP10-7</label>
    </interactant>
    <organismsDiffer>false</organismsDiffer>
    <experiments>5</experiments>
</comment>
<comment type="interaction">
    <interactant intactId="EBI-358049">
        <id>Q13895</id>
    </interactant>
    <interactant intactId="EBI-10172511">
        <id>Q9BYR5</id>
        <label>KRTAP4-2</label>
    </interactant>
    <organismsDiffer>false</organismsDiffer>
    <experiments>3</experiments>
</comment>
<comment type="interaction">
    <interactant intactId="EBI-358049">
        <id>Q13895</id>
    </interactant>
    <interactant intactId="EBI-2686809">
        <id>Q96JM7</id>
        <label>L3MBTL3</label>
    </interactant>
    <organismsDiffer>false</organismsDiffer>
    <experiments>5</experiments>
</comment>
<comment type="interaction">
    <interactant intactId="EBI-358049">
        <id>Q13895</id>
    </interactant>
    <interactant intactId="EBI-11985629">
        <id>Q96JM7-2</id>
        <label>L3MBTL3</label>
    </interactant>
    <organismsDiffer>false</organismsDiffer>
    <experiments>3</experiments>
</comment>
<comment type="interaction">
    <interactant intactId="EBI-358049">
        <id>Q13895</id>
    </interactant>
    <interactant intactId="EBI-740738">
        <id>O95751</id>
        <label>LDOC1</label>
    </interactant>
    <organismsDiffer>false</organismsDiffer>
    <experiments>4</experiments>
</comment>
<comment type="interaction">
    <interactant intactId="EBI-358049">
        <id>Q13895</id>
    </interactant>
    <interactant intactId="EBI-12039345">
        <id>Q9UBR4-2</id>
        <label>LHX3</label>
    </interactant>
    <organismsDiffer>false</organismsDiffer>
    <experiments>3</experiments>
</comment>
<comment type="interaction">
    <interactant intactId="EBI-358049">
        <id>Q13895</id>
    </interactant>
    <interactant intactId="EBI-8639312">
        <id>P25800</id>
        <label>LMO1</label>
    </interactant>
    <organismsDiffer>false</organismsDiffer>
    <experiments>3</experiments>
</comment>
<comment type="interaction">
    <interactant intactId="EBI-358049">
        <id>Q13895</id>
    </interactant>
    <interactant intactId="EBI-11959475">
        <id>P25791-3</id>
        <label>LMO2</label>
    </interactant>
    <organismsDiffer>false</organismsDiffer>
    <experiments>3</experiments>
</comment>
<comment type="interaction">
    <interactant intactId="EBI-358049">
        <id>Q13895</id>
    </interactant>
    <interactant intactId="EBI-2341787">
        <id>Q17RB8</id>
        <label>LONRF1</label>
    </interactant>
    <organismsDiffer>false</organismsDiffer>
    <experiments>8</experiments>
</comment>
<comment type="interaction">
    <interactant intactId="EBI-358049">
        <id>Q13895</id>
    </interactant>
    <interactant intactId="EBI-2558389">
        <id>Q96GA3</id>
        <label>LTV1</label>
    </interactant>
    <organismsDiffer>false</organismsDiffer>
    <experiments>15</experiments>
</comment>
<comment type="interaction">
    <interactant intactId="EBI-358049">
        <id>Q13895</id>
    </interactant>
    <interactant intactId="EBI-1216080">
        <id>Q9Y250</id>
        <label>LZTS1</label>
    </interactant>
    <organismsDiffer>false</organismsDiffer>
    <experiments>3</experiments>
</comment>
<comment type="interaction">
    <interactant intactId="EBI-358049">
        <id>Q13895</id>
    </interactant>
    <interactant intactId="EBI-741037">
        <id>Q9BRK4</id>
        <label>LZTS2</label>
    </interactant>
    <organismsDiffer>false</organismsDiffer>
    <experiments>6</experiments>
</comment>
<comment type="interaction">
    <interactant intactId="EBI-358049">
        <id>Q13895</id>
    </interactant>
    <interactant intactId="EBI-11323212">
        <id>Q8IYB1</id>
        <label>MB21D2</label>
    </interactant>
    <organismsDiffer>false</organismsDiffer>
    <experiments>3</experiments>
</comment>
<comment type="interaction">
    <interactant intactId="EBI-358049">
        <id>Q13895</id>
    </interactant>
    <interactant intactId="EBI-3954372">
        <id>D6RGH6</id>
        <label>MCIDAS</label>
    </interactant>
    <organismsDiffer>false</organismsDiffer>
    <experiments>3</experiments>
</comment>
<comment type="interaction">
    <interactant intactId="EBI-358049">
        <id>Q13895</id>
    </interactant>
    <interactant intactId="EBI-399266">
        <id>Q9HAF1</id>
        <label>MEAF6</label>
    </interactant>
    <organismsDiffer>false</organismsDiffer>
    <experiments>3</experiments>
</comment>
<comment type="interaction">
    <interactant intactId="EBI-358049">
        <id>Q13895</id>
    </interactant>
    <interactant intactId="EBI-2864512">
        <id>P50221</id>
        <label>MEOX1</label>
    </interactant>
    <organismsDiffer>false</organismsDiffer>
    <experiments>3</experiments>
</comment>
<comment type="interaction">
    <interactant intactId="EBI-358049">
        <id>Q13895</id>
    </interactant>
    <interactant intactId="EBI-16439278">
        <id>Q6FHY5</id>
        <label>MEOX2</label>
    </interactant>
    <organismsDiffer>false</organismsDiffer>
    <experiments>3</experiments>
</comment>
<comment type="interaction">
    <interactant intactId="EBI-358049">
        <id>Q13895</id>
    </interactant>
    <interactant intactId="EBI-2340316">
        <id>O15344</id>
        <label>MID1</label>
    </interactant>
    <organismsDiffer>false</organismsDiffer>
    <experiments>4</experiments>
</comment>
<comment type="interaction">
    <interactant intactId="EBI-358049">
        <id>Q13895</id>
    </interactant>
    <interactant intactId="EBI-10172526">
        <id>Q9UJV3-2</id>
        <label>MID2</label>
    </interactant>
    <organismsDiffer>false</organismsDiffer>
    <experiments>8</experiments>
</comment>
<comment type="interaction">
    <interactant intactId="EBI-358049">
        <id>Q13895</id>
    </interactant>
    <interactant intactId="EBI-2548751">
        <id>Q8TD10</id>
        <label>MIPOL1</label>
    </interactant>
    <organismsDiffer>false</organismsDiffer>
    <experiments>8</experiments>
</comment>
<comment type="interaction">
    <interactant intactId="EBI-358049">
        <id>Q13895</id>
    </interactant>
    <interactant intactId="EBI-373524">
        <id>Q9UHC7</id>
        <label>MKRN1</label>
    </interactant>
    <organismsDiffer>false</organismsDiffer>
    <experiments>3</experiments>
</comment>
<comment type="interaction">
    <interactant intactId="EBI-358049">
        <id>Q13895</id>
    </interactant>
    <interactant intactId="EBI-5235884">
        <id>O00566</id>
        <label>MPHOSPH10</label>
    </interactant>
    <organismsDiffer>false</organismsDiffer>
    <experiments>3</experiments>
</comment>
<comment type="interaction">
    <interactant intactId="EBI-358049">
        <id>Q13895</id>
    </interactant>
    <interactant intactId="EBI-748896">
        <id>Q96HT8</id>
        <label>MRFAP1L1</label>
    </interactant>
    <organismsDiffer>false</organismsDiffer>
    <experiments>13</experiments>
</comment>
<comment type="interaction">
    <interactant intactId="EBI-358049">
        <id>Q13895</id>
    </interactant>
    <interactant intactId="EBI-7850168">
        <id>Q8NCY6</id>
        <label>MSANTD4</label>
    </interactant>
    <organismsDiffer>false</organismsDiffer>
    <experiments>3</experiments>
</comment>
<comment type="interaction">
    <interactant intactId="EBI-358049">
        <id>Q13895</id>
    </interactant>
    <interactant intactId="EBI-742948">
        <id>Q5JR59</id>
        <label>MTUS2</label>
    </interactant>
    <organismsDiffer>false</organismsDiffer>
    <experiments>5</experiments>
</comment>
<comment type="interaction">
    <interactant intactId="EBI-358049">
        <id>Q13895</id>
    </interactant>
    <interactant intactId="EBI-11522433">
        <id>Q5JR59-3</id>
        <label>MTUS2</label>
    </interactant>
    <organismsDiffer>false</organismsDiffer>
    <experiments>3</experiments>
</comment>
<comment type="interaction">
    <interactant intactId="EBI-358049">
        <id>Q13895</id>
    </interactant>
    <interactant intactId="EBI-10172876">
        <id>Q7Z6G3-2</id>
        <label>NECAB2</label>
    </interactant>
    <organismsDiffer>false</organismsDiffer>
    <experiments>6</experiments>
</comment>
<comment type="interaction">
    <interactant intactId="EBI-358049">
        <id>Q13895</id>
    </interactant>
    <interactant intactId="EBI-1014514">
        <id>P35240-4</id>
        <label>NF2</label>
    </interactant>
    <organismsDiffer>false</organismsDiffer>
    <experiments>3</experiments>
</comment>
<comment type="interaction">
    <interactant intactId="EBI-358049">
        <id>Q13895</id>
    </interactant>
    <interactant intactId="EBI-10225049">
        <id>Q7RTU3</id>
        <label>OLIG3</label>
    </interactant>
    <organismsDiffer>false</organismsDiffer>
    <experiments>5</experiments>
</comment>
<comment type="interaction">
    <interactant intactId="EBI-358049">
        <id>Q13895</id>
    </interactant>
    <interactant intactId="EBI-1051317">
        <id>Q9H4L5</id>
        <label>OSBPL3</label>
    </interactant>
    <organismsDiffer>false</organismsDiffer>
    <experiments>3</experiments>
</comment>
<comment type="interaction">
    <interactant intactId="EBI-358049">
        <id>Q13895</id>
    </interactant>
    <interactant intactId="EBI-1105124">
        <id>Q5VU43</id>
        <label>PDE4DIP</label>
    </interactant>
    <organismsDiffer>false</organismsDiffer>
    <experiments>5</experiments>
</comment>
<comment type="interaction">
    <interactant intactId="EBI-358049">
        <id>Q13895</id>
    </interactant>
    <interactant intactId="EBI-9640281">
        <id>Q5VU43-2</id>
        <label>PDE4DIP</label>
    </interactant>
    <organismsDiffer>false</organismsDiffer>
    <experiments>3</experiments>
</comment>
<comment type="interaction">
    <interactant intactId="EBI-358049">
        <id>Q13895</id>
    </interactant>
    <interactant intactId="EBI-713786">
        <id>Q8IXK0</id>
        <label>PHC2</label>
    </interactant>
    <organismsDiffer>false</organismsDiffer>
    <experiments>6</experiments>
</comment>
<comment type="interaction">
    <interactant intactId="EBI-358049">
        <id>Q13895</id>
    </interactant>
    <interactant intactId="EBI-79165">
        <id>Q9NRD5</id>
        <label>PICK1</label>
    </interactant>
    <organismsDiffer>false</organismsDiffer>
    <experiments>3</experiments>
</comment>
<comment type="interaction">
    <interactant intactId="EBI-358049">
        <id>Q13895</id>
    </interactant>
    <interactant intactId="EBI-357318">
        <id>Q9NWS0</id>
        <label>PIH1D1</label>
    </interactant>
    <organismsDiffer>false</organismsDiffer>
    <experiments>3</experiments>
</comment>
<comment type="interaction">
    <interactant intactId="EBI-358049">
        <id>Q13895</id>
    </interactant>
    <interactant intactId="EBI-302345">
        <id>Q8ND90</id>
        <label>PNMA1</label>
    </interactant>
    <organismsDiffer>false</organismsDiffer>
    <experiments>3</experiments>
</comment>
<comment type="interaction">
    <interactant intactId="EBI-358049">
        <id>Q13895</id>
    </interactant>
    <interactant intactId="EBI-302355">
        <id>Q9UL42</id>
        <label>PNMA2</label>
    </interactant>
    <organismsDiffer>false</organismsDiffer>
    <experiments>7</experiments>
</comment>
<comment type="interaction">
    <interactant intactId="EBI-358049">
        <id>Q13895</id>
    </interactant>
    <interactant intactId="EBI-2348662">
        <id>Q96MT3</id>
        <label>PRICKLE1</label>
    </interactant>
    <organismsDiffer>false</organismsDiffer>
    <experiments>3</experiments>
</comment>
<comment type="interaction">
    <interactant intactId="EBI-358049">
        <id>Q13895</id>
    </interactant>
    <interactant intactId="EBI-357669">
        <id>P62333</id>
        <label>PSMC6</label>
    </interactant>
    <organismsDiffer>false</organismsDiffer>
    <experiments>3</experiments>
</comment>
<comment type="interaction">
    <interactant intactId="EBI-358049">
        <id>Q13895</id>
    </interactant>
    <interactant intactId="EBI-717233">
        <id>Q9H0H5</id>
        <label>RACGAP1</label>
    </interactant>
    <organismsDiffer>false</organismsDiffer>
    <experiments>3</experiments>
</comment>
<comment type="interaction">
    <interactant intactId="EBI-358049">
        <id>Q13895</id>
    </interactant>
    <interactant intactId="EBI-296739">
        <id>P63244</id>
        <label>RACK1</label>
    </interactant>
    <organismsDiffer>false</organismsDiffer>
    <experiments>5</experiments>
</comment>
<comment type="interaction">
    <interactant intactId="EBI-358049">
        <id>Q13895</id>
    </interactant>
    <interactant intactId="EBI-9512693">
        <id>Q53GL6</id>
        <label>RALY</label>
    </interactant>
    <organismsDiffer>false</organismsDiffer>
    <experiments>3</experiments>
</comment>
<comment type="interaction">
    <interactant intactId="EBI-358049">
        <id>Q13895</id>
    </interactant>
    <interactant intactId="EBI-741520">
        <id>Q86SE5</id>
        <label>RALYL</label>
    </interactant>
    <organismsDiffer>false</organismsDiffer>
    <experiments>3</experiments>
</comment>
<comment type="interaction">
    <interactant intactId="EBI-358049">
        <id>Q13895</id>
    </interactant>
    <interactant intactId="EBI-1210429">
        <id>Q9NYW8</id>
        <label>RBAK</label>
    </interactant>
    <organismsDiffer>false</organismsDiffer>
    <experiments>3</experiments>
</comment>
<comment type="interaction">
    <interactant intactId="EBI-358049">
        <id>Q13895</id>
    </interactant>
    <interactant intactId="EBI-630339">
        <id>Q8TA86</id>
        <label>RP9</label>
    </interactant>
    <organismsDiffer>false</organismsDiffer>
    <experiments>3</experiments>
</comment>
<comment type="interaction">
    <interactant intactId="EBI-358049">
        <id>Q13895</id>
    </interactant>
    <interactant intactId="EBI-2952709">
        <id>Q92622</id>
        <label>RUBCN</label>
    </interactant>
    <organismsDiffer>false</organismsDiffer>
    <experiments>3</experiments>
</comment>
<comment type="interaction">
    <interactant intactId="EBI-358049">
        <id>Q13895</id>
    </interactant>
    <interactant intactId="EBI-395421">
        <id>Q16637</id>
        <label>SMN2</label>
    </interactant>
    <organismsDiffer>false</organismsDiffer>
    <experiments>8</experiments>
</comment>
<comment type="interaction">
    <interactant intactId="EBI-358049">
        <id>Q13895</id>
    </interactant>
    <interactant intactId="EBI-632715">
        <id>Q13573</id>
        <label>SNW1</label>
    </interactant>
    <organismsDiffer>false</organismsDiffer>
    <experiments>3</experiments>
</comment>
<comment type="interaction">
    <interactant intactId="EBI-358049">
        <id>Q13895</id>
    </interactant>
    <interactant intactId="EBI-2212028">
        <id>Q9Y2D8</id>
        <label>SSX2IP</label>
    </interactant>
    <organismsDiffer>false</organismsDiffer>
    <experiments>5</experiments>
</comment>
<comment type="interaction">
    <interactant intactId="EBI-358049">
        <id>Q13895</id>
    </interactant>
    <interactant intactId="EBI-714135">
        <id>O75558</id>
        <label>STX11</label>
    </interactant>
    <organismsDiffer>false</organismsDiffer>
    <experiments>8</experiments>
</comment>
<comment type="interaction">
    <interactant intactId="EBI-358049">
        <id>Q13895</id>
    </interactant>
    <interactant intactId="EBI-10180409">
        <id>Q969V4</id>
        <label>TEKT1</label>
    </interactant>
    <organismsDiffer>false</organismsDiffer>
    <experiments>6</experiments>
</comment>
<comment type="interaction">
    <interactant intactId="EBI-358049">
        <id>Q13895</id>
    </interactant>
    <interactant intactId="EBI-1105213">
        <id>Q9UBB9</id>
        <label>TFIP11</label>
    </interactant>
    <organismsDiffer>false</organismsDiffer>
    <experiments>3</experiments>
</comment>
<comment type="interaction">
    <interactant intactId="EBI-358049">
        <id>Q13895</id>
    </interactant>
    <interactant intactId="EBI-741515">
        <id>Q9NVV9</id>
        <label>THAP1</label>
    </interactant>
    <organismsDiffer>false</organismsDiffer>
    <experiments>8</experiments>
</comment>
<comment type="interaction">
    <interactant intactId="EBI-358049">
        <id>Q13895</id>
    </interactant>
    <interactant intactId="EBI-717810">
        <id>Q08117</id>
        <label>TLE5</label>
    </interactant>
    <organismsDiffer>false</organismsDiffer>
    <experiments>5</experiments>
</comment>
<comment type="interaction">
    <interactant intactId="EBI-358049">
        <id>Q13895</id>
    </interactant>
    <interactant intactId="EBI-11741437">
        <id>Q08117-2</id>
        <label>TLE5</label>
    </interactant>
    <organismsDiffer>false</organismsDiffer>
    <experiments>5</experiments>
</comment>
<comment type="interaction">
    <interactant intactId="EBI-358049">
        <id>Q13895</id>
    </interactant>
    <interactant intactId="EBI-357849">
        <id>Q15025</id>
        <label>TNIP1</label>
    </interactant>
    <organismsDiffer>false</organismsDiffer>
    <experiments>8</experiments>
</comment>
<comment type="interaction">
    <interactant intactId="EBI-358049">
        <id>Q13895</id>
    </interactant>
    <interactant intactId="EBI-355744">
        <id>Q12933</id>
        <label>TRAF2</label>
    </interactant>
    <organismsDiffer>false</organismsDiffer>
    <experiments>3</experiments>
</comment>
<comment type="interaction">
    <interactant intactId="EBI-358049">
        <id>Q13895</id>
    </interactant>
    <interactant intactId="EBI-3650647">
        <id>Q9BUZ4</id>
        <label>TRAF4</label>
    </interactant>
    <organismsDiffer>false</organismsDiffer>
    <experiments>9</experiments>
</comment>
<comment type="interaction">
    <interactant intactId="EBI-358049">
        <id>Q13895</id>
    </interactant>
    <interactant intactId="EBI-2820256">
        <id>Q14142</id>
        <label>TRIM14</label>
    </interactant>
    <organismsDiffer>false</organismsDiffer>
    <experiments>3</experiments>
</comment>
<comment type="interaction">
    <interactant intactId="EBI-358049">
        <id>Q13895</id>
    </interactant>
    <interactant intactId="EBI-719493">
        <id>P14373</id>
        <label>TRIM27</label>
    </interactant>
    <organismsDiffer>false</organismsDiffer>
    <experiments>6</experiments>
</comment>
<comment type="interaction">
    <interactant intactId="EBI-358049">
        <id>Q13895</id>
    </interactant>
    <interactant intactId="EBI-741602">
        <id>O94972</id>
        <label>TRIM37</label>
    </interactant>
    <organismsDiffer>false</organismsDiffer>
    <experiments>9</experiments>
</comment>
<comment type="interaction">
    <interactant intactId="EBI-358049">
        <id>Q13895</id>
    </interactant>
    <interactant intactId="EBI-2130415">
        <id>O00635</id>
        <label>TRIM38</label>
    </interactant>
    <organismsDiffer>false</organismsDiffer>
    <experiments>3</experiments>
</comment>
<comment type="interaction">
    <interactant intactId="EBI-358049">
        <id>Q13895</id>
    </interactant>
    <interactant intactId="EBI-725997">
        <id>Q8WV44</id>
        <label>TRIM41</label>
    </interactant>
    <organismsDiffer>false</organismsDiffer>
    <experiments>5</experiments>
</comment>
<comment type="interaction">
    <interactant intactId="EBI-358049">
        <id>Q13895</id>
    </interactant>
    <interactant intactId="EBI-2130429">
        <id>Q9BYV2</id>
        <label>TRIM54</label>
    </interactant>
    <organismsDiffer>false</organismsDiffer>
    <experiments>7</experiments>
</comment>
<comment type="interaction">
    <interactant intactId="EBI-358049">
        <id>Q13895</id>
    </interactant>
    <interactant intactId="EBI-11522718">
        <id>Q9BYV6-2</id>
        <label>TRIM55</label>
    </interactant>
    <organismsDiffer>false</organismsDiffer>
    <experiments>3</experiments>
</comment>
<comment type="interaction">
    <interactant intactId="EBI-358049">
        <id>Q13895</id>
    </interactant>
    <interactant intactId="EBI-742327">
        <id>Q15654</id>
        <label>TRIP6</label>
    </interactant>
    <organismsDiffer>false</organismsDiffer>
    <experiments>6</experiments>
</comment>
<comment type="interaction">
    <interactant intactId="EBI-358049">
        <id>Q13895</id>
    </interactant>
    <interactant intactId="EBI-950001">
        <id>Q12816</id>
        <label>TRO</label>
    </interactant>
    <organismsDiffer>false</organismsDiffer>
    <experiments>4</experiments>
</comment>
<comment type="interaction">
    <interactant intactId="EBI-358049">
        <id>Q13895</id>
    </interactant>
    <interactant intactId="EBI-2349743">
        <id>Q12815</id>
        <label>TROAP</label>
    </interactant>
    <organismsDiffer>false</organismsDiffer>
    <experiments>9</experiments>
</comment>
<comment type="interaction">
    <interactant intactId="EBI-358049">
        <id>Q13895</id>
    </interactant>
    <interactant intactId="EBI-10230777">
        <id>A4D1L5</id>
        <label>UBE2H</label>
    </interactant>
    <organismsDiffer>false</organismsDiffer>
    <experiments>3</experiments>
</comment>
<comment type="interaction">
    <interactant intactId="EBI-358049">
        <id>Q13895</id>
    </interactant>
    <interactant intactId="EBI-8601749">
        <id>Q495M9</id>
        <label>USH1G</label>
    </interactant>
    <organismsDiffer>false</organismsDiffer>
    <experiments>3</experiments>
</comment>
<comment type="interaction">
    <interactant intactId="EBI-358049">
        <id>Q13895</id>
    </interactant>
    <interactant intactId="EBI-353844">
        <id>P08670</id>
        <label>VIM</label>
    </interactant>
    <organismsDiffer>false</organismsDiffer>
    <experiments>3</experiments>
</comment>
<comment type="interaction">
    <interactant intactId="EBI-358049">
        <id>Q13895</id>
    </interactant>
    <interactant intactId="EBI-4400866">
        <id>Q9H9H4</id>
        <label>VPS37B</label>
    </interactant>
    <organismsDiffer>false</organismsDiffer>
    <experiments>8</experiments>
</comment>
<comment type="interaction">
    <interactant intactId="EBI-358049">
        <id>Q13895</id>
    </interactant>
    <interactant intactId="EBI-2799833">
        <id>Q8N1B4</id>
        <label>VPS52</label>
    </interactant>
    <organismsDiffer>false</organismsDiffer>
    <experiments>3</experiments>
</comment>
<comment type="interaction">
    <interactant intactId="EBI-358049">
        <id>Q13895</id>
    </interactant>
    <interactant intactId="EBI-12026286">
        <id>Q9UPY6-2</id>
        <label>WASF3</label>
    </interactant>
    <organismsDiffer>false</organismsDiffer>
    <experiments>3</experiments>
</comment>
<comment type="interaction">
    <interactant intactId="EBI-358049">
        <id>Q13895</id>
    </interactant>
    <interactant intactId="EBI-751647">
        <id>Q15007</id>
        <label>WTAP</label>
    </interactant>
    <organismsDiffer>false</organismsDiffer>
    <experiments>3</experiments>
</comment>
<comment type="interaction">
    <interactant intactId="EBI-358049">
        <id>Q13895</id>
    </interactant>
    <interactant intactId="EBI-10176632">
        <id>O43829</id>
        <label>ZBTB14</label>
    </interactant>
    <organismsDiffer>false</organismsDiffer>
    <experiments>8</experiments>
</comment>
<comment type="interaction">
    <interactant intactId="EBI-358049">
        <id>Q13895</id>
    </interactant>
    <interactant intactId="EBI-742740">
        <id>Q96BR9</id>
        <label>ZBTB8A</label>
    </interactant>
    <organismsDiffer>false</organismsDiffer>
    <experiments>8</experiments>
</comment>
<comment type="interaction">
    <interactant intactId="EBI-358049">
        <id>Q13895</id>
    </interactant>
    <interactant intactId="EBI-14104088">
        <id>Q53FD0-2</id>
        <label>ZC2HC1C</label>
    </interactant>
    <organismsDiffer>false</organismsDiffer>
    <experiments>3</experiments>
</comment>
<comment type="interaction">
    <interactant intactId="EBI-358049">
        <id>Q13895</id>
    </interactant>
    <interactant intactId="EBI-711679">
        <id>Q9NTW7</id>
        <label>ZFP64</label>
    </interactant>
    <organismsDiffer>false</organismsDiffer>
    <experiments>5</experiments>
</comment>
<comment type="interaction">
    <interactant intactId="EBI-358049">
        <id>Q13895</id>
    </interactant>
    <interactant intactId="EBI-7850213">
        <id>Q9UDW3</id>
        <label>ZMAT5</label>
    </interactant>
    <organismsDiffer>false</organismsDiffer>
    <experiments>3</experiments>
</comment>
<comment type="interaction">
    <interactant intactId="EBI-358049">
        <id>Q13895</id>
    </interactant>
    <interactant intactId="EBI-1640204">
        <id>Q9UDV6</id>
        <label>ZNF212</label>
    </interactant>
    <organismsDiffer>false</organismsDiffer>
    <experiments>3</experiments>
</comment>
<comment type="interaction">
    <interactant intactId="EBI-358049">
        <id>Q13895</id>
    </interactant>
    <interactant intactId="EBI-10754950">
        <id>Q9HBT8</id>
        <label>ZNF286A</label>
    </interactant>
    <organismsDiffer>false</organismsDiffer>
    <experiments>3</experiments>
</comment>
<comment type="interaction">
    <interactant intactId="EBI-358049">
        <id>Q13895</id>
    </interactant>
    <interactant intactId="EBI-743265">
        <id>Q9BUY5</id>
        <label>ZNF426</label>
    </interactant>
    <organismsDiffer>false</organismsDiffer>
    <experiments>3</experiments>
</comment>
<comment type="interaction">
    <interactant intactId="EBI-358049">
        <id>Q13895</id>
    </interactant>
    <interactant intactId="EBI-8489702">
        <id>Q9C0F3</id>
        <label>ZNF436</label>
    </interactant>
    <organismsDiffer>false</organismsDiffer>
    <experiments>3</experiments>
</comment>
<comment type="interaction">
    <interactant intactId="EBI-358049">
        <id>Q13895</id>
    </interactant>
    <interactant intactId="EBI-11962468">
        <id>Q7Z4V0</id>
        <label>ZNF438</label>
    </interactant>
    <organismsDiffer>false</organismsDiffer>
    <experiments>3</experiments>
</comment>
<comment type="interaction">
    <interactant intactId="EBI-358049">
        <id>Q13895</id>
    </interactant>
    <interactant intactId="EBI-12006434">
        <id>Q96MX3</id>
        <label>ZNF48</label>
    </interactant>
    <organismsDiffer>false</organismsDiffer>
    <experiments>3</experiments>
</comment>
<comment type="interaction">
    <interactant intactId="EBI-358049">
        <id>Q13895</id>
    </interactant>
    <interactant intactId="EBI-745520">
        <id>Q9P0T4</id>
        <label>ZNF581</label>
    </interactant>
    <organismsDiffer>false</organismsDiffer>
    <experiments>3</experiments>
</comment>
<comment type="interaction">
    <interactant intactId="EBI-358049">
        <id>Q13895</id>
    </interactant>
    <interactant intactId="EBI-625509">
        <id>Q8N720</id>
        <label>ZNF655</label>
    </interactant>
    <organismsDiffer>false</organismsDiffer>
    <experiments>3</experiments>
</comment>
<comment type="interaction">
    <interactant intactId="EBI-358049">
        <id>Q13895</id>
    </interactant>
    <interactant intactId="EBI-12817597">
        <id>Q96K58-2</id>
        <label>ZNF668</label>
    </interactant>
    <organismsDiffer>false</organismsDiffer>
    <experiments>3</experiments>
</comment>
<comment type="interaction">
    <interactant intactId="EBI-358049">
        <id>Q13895</id>
    </interactant>
    <interactant intactId="EBI-7138235">
        <id>Q9NQZ8</id>
        <label>ZNF71</label>
    </interactant>
    <organismsDiffer>false</organismsDiffer>
    <experiments>3</experiments>
</comment>
<comment type="interaction">
    <interactant intactId="EBI-358049">
        <id>Q13895</id>
    </interactant>
    <interactant intactId="EBI-10251462">
        <id>Q6NX45</id>
        <label>ZNF774</label>
    </interactant>
    <organismsDiffer>false</organismsDiffer>
    <experiments>3</experiments>
</comment>
<comment type="interaction">
    <interactant intactId="EBI-358049">
        <id>Q13895</id>
    </interactant>
    <interactant intactId="EBI-5667516">
        <id>Q9Y2P0</id>
        <label>ZNF835</label>
    </interactant>
    <organismsDiffer>false</organismsDiffer>
    <experiments>3</experiments>
</comment>
<comment type="interaction">
    <interactant intactId="EBI-358049">
        <id>Q13895</id>
    </interactant>
    <interactant intactId="EBI-527853">
        <id>Q9UGI0</id>
        <label>ZRANB1</label>
    </interactant>
    <organismsDiffer>false</organismsDiffer>
    <experiments>3</experiments>
</comment>
<comment type="interaction">
    <interactant intactId="EBI-358049">
        <id>Q13895</id>
    </interactant>
    <interactant intactId="EBI-10178224">
        <id>P10073</id>
        <label>ZSCAN22</label>
    </interactant>
    <organismsDiffer>false</organismsDiffer>
    <experiments>3</experiments>
</comment>
<comment type="interaction">
    <interactant intactId="EBI-358049">
        <id>Q13895</id>
    </interactant>
    <interactant intactId="EBI-25475856">
        <id>P0DTC9</id>
        <label>N</label>
    </interactant>
    <organismsDiffer>true</organismsDiffer>
    <experiments>5</experiments>
</comment>
<comment type="subcellular location">
    <subcellularLocation>
        <location evidence="3">Cytoplasm</location>
    </subcellularLocation>
    <subcellularLocation>
        <location evidence="3 4">Nucleus</location>
        <location evidence="3 4">Nucleolus</location>
    </subcellularLocation>
    <text>Associated with 40S ribosomal subunits.</text>
</comment>
<comment type="tissue specificity">
    <text>Found in the placenta from the sixth week of pregnancy. Was localized in the cytoplasm of the syncytiotrophoblast in the chorionic villi and in endometrial decidual cells at the uteroplacental interface. After week 10, the level decreased and then disappeared from placental villi.</text>
</comment>
<comment type="miscellaneous">
    <text>HeLa cells lacking BYSL show a delay in the processing of the 18S rRNA component of the 40S ribosomal subunit. HT-H cells lacking BYSL show trophinin-independent signaling through ERBB4.</text>
</comment>
<comment type="similarity">
    <text evidence="6">Belongs to the bystin family.</text>
</comment>
<comment type="sequence caution" evidence="6">
    <conflict type="erroneous initiation">
        <sequence resource="EMBL-CDS" id="AAC16603"/>
    </conflict>
    <text>Truncated N-terminus.</text>
</comment>
<keyword id="KW-0002">3D-structure</keyword>
<keyword id="KW-0963">Cytoplasm</keyword>
<keyword id="KW-0488">Methylation</keyword>
<keyword id="KW-0539">Nucleus</keyword>
<keyword id="KW-0597">Phosphoprotein</keyword>
<keyword id="KW-1267">Proteomics identification</keyword>
<keyword id="KW-1185">Reference proteome</keyword>
<keyword id="KW-0690">Ribosome biogenesis</keyword>
<organism>
    <name type="scientific">Homo sapiens</name>
    <name type="common">Human</name>
    <dbReference type="NCBI Taxonomy" id="9606"/>
    <lineage>
        <taxon>Eukaryota</taxon>
        <taxon>Metazoa</taxon>
        <taxon>Chordata</taxon>
        <taxon>Craniata</taxon>
        <taxon>Vertebrata</taxon>
        <taxon>Euteleostomi</taxon>
        <taxon>Mammalia</taxon>
        <taxon>Eutheria</taxon>
        <taxon>Euarchontoglires</taxon>
        <taxon>Primates</taxon>
        <taxon>Haplorrhini</taxon>
        <taxon>Catarrhini</taxon>
        <taxon>Hominidae</taxon>
        <taxon>Homo</taxon>
    </lineage>
</organism>
<protein>
    <recommendedName>
        <fullName evidence="6">Bystin</fullName>
    </recommendedName>
</protein>
<feature type="chain" id="PRO_0000186114" description="Bystin">
    <location>
        <begin position="1"/>
        <end position="437"/>
    </location>
</feature>
<feature type="region of interest" description="Disordered" evidence="1">
    <location>
        <begin position="1"/>
        <end position="105"/>
    </location>
</feature>
<feature type="compositionally biased region" description="Basic and acidic residues" evidence="1">
    <location>
        <begin position="71"/>
        <end position="87"/>
    </location>
</feature>
<feature type="modified residue" description="Omega-N-methylarginine" evidence="16">
    <location>
        <position position="40"/>
    </location>
</feature>
<feature type="modified residue" description="Phosphoserine" evidence="15">
    <location>
        <position position="55"/>
    </location>
</feature>
<feature type="modified residue" description="Phosphoserine" evidence="8 9 10 11 12 13 14 15">
    <location>
        <position position="98"/>
    </location>
</feature>
<feature type="modified residue" description="Phosphothreonine" evidence="15">
    <location>
        <position position="156"/>
    </location>
</feature>
<feature type="modified residue" description="Phosphoserine" evidence="12">
    <location>
        <position position="167"/>
    </location>
</feature>
<feature type="modified residue" description="Phosphoserine" evidence="15">
    <location>
        <position position="414"/>
    </location>
</feature>
<feature type="sequence variant" id="VAR_033641" description="In dbSNP:rs2296916.">
    <original>E</original>
    <variation>K</variation>
    <location>
        <position position="103"/>
    </location>
</feature>
<feature type="sequence variant" id="VAR_048439" description="In dbSNP:rs3828855.">
    <original>P</original>
    <variation>S</variation>
    <location>
        <position position="426"/>
    </location>
</feature>
<feature type="sequence conflict" description="In Ref. 1; AAH07340." evidence="6" ref="1">
    <original>E</original>
    <variation>D</variation>
    <location>
        <position position="214"/>
    </location>
</feature>
<feature type="sequence conflict" description="In Ref. 2; AAC16603." evidence="6" ref="2">
    <original>A</original>
    <variation>G</variation>
    <location>
        <position position="263"/>
    </location>
</feature>
<feature type="helix" evidence="18">
    <location>
        <begin position="19"/>
        <end position="27"/>
    </location>
</feature>
<feature type="helix" evidence="18">
    <location>
        <begin position="52"/>
        <end position="71"/>
    </location>
</feature>
<feature type="helix" evidence="18">
    <location>
        <begin position="143"/>
        <end position="166"/>
    </location>
</feature>
<feature type="helix" evidence="18">
    <location>
        <begin position="181"/>
        <end position="193"/>
    </location>
</feature>
<feature type="turn" evidence="18">
    <location>
        <begin position="202"/>
        <end position="206"/>
    </location>
</feature>
<feature type="helix" evidence="18">
    <location>
        <begin position="207"/>
        <end position="209"/>
    </location>
</feature>
<feature type="helix" evidence="18">
    <location>
        <begin position="213"/>
        <end position="219"/>
    </location>
</feature>
<feature type="helix" evidence="20">
    <location>
        <begin position="222"/>
        <end position="224"/>
    </location>
</feature>
<feature type="helix" evidence="18">
    <location>
        <begin position="227"/>
        <end position="239"/>
    </location>
</feature>
<feature type="helix" evidence="18">
    <location>
        <begin position="244"/>
        <end position="252"/>
    </location>
</feature>
<feature type="helix" evidence="18">
    <location>
        <begin position="254"/>
        <end position="265"/>
    </location>
</feature>
<feature type="helix" evidence="18">
    <location>
        <begin position="270"/>
        <end position="280"/>
    </location>
</feature>
<feature type="helix" evidence="18">
    <location>
        <begin position="283"/>
        <end position="289"/>
    </location>
</feature>
<feature type="helix" evidence="18">
    <location>
        <begin position="291"/>
        <end position="295"/>
    </location>
</feature>
<feature type="helix" evidence="18">
    <location>
        <begin position="302"/>
        <end position="314"/>
    </location>
</feature>
<feature type="helix" evidence="18">
    <location>
        <begin position="319"/>
        <end position="331"/>
    </location>
</feature>
<feature type="helix" evidence="18">
    <location>
        <begin position="338"/>
        <end position="346"/>
    </location>
</feature>
<feature type="helix" evidence="18">
    <location>
        <begin position="354"/>
        <end position="366"/>
    </location>
</feature>
<feature type="strand" evidence="19">
    <location>
        <begin position="367"/>
        <end position="369"/>
    </location>
</feature>
<feature type="helix" evidence="18">
    <location>
        <begin position="376"/>
        <end position="388"/>
    </location>
</feature>
<feature type="helix" evidence="17">
    <location>
        <begin position="390"/>
        <end position="392"/>
    </location>
</feature>
<feature type="helix" evidence="18">
    <location>
        <begin position="395"/>
        <end position="407"/>
    </location>
</feature>
<feature type="turn" evidence="18">
    <location>
        <begin position="411"/>
        <end position="413"/>
    </location>
</feature>
<feature type="helix" evidence="18">
    <location>
        <begin position="414"/>
        <end position="422"/>
    </location>
</feature>
<dbReference type="EMBL" id="BC007340">
    <property type="protein sequence ID" value="AAH07340.3"/>
    <property type="molecule type" value="mRNA"/>
</dbReference>
<dbReference type="EMBL" id="BC050645">
    <property type="protein sequence ID" value="AAH50645.1"/>
    <property type="molecule type" value="mRNA"/>
</dbReference>
<dbReference type="EMBL" id="BC062627">
    <property type="protein sequence ID" value="AAH62627.2"/>
    <property type="molecule type" value="mRNA"/>
</dbReference>
<dbReference type="EMBL" id="L36720">
    <property type="protein sequence ID" value="AAC16603.2"/>
    <property type="status" value="ALT_INIT"/>
    <property type="molecule type" value="mRNA"/>
</dbReference>
<dbReference type="CCDS" id="CCDS34450.1"/>
<dbReference type="RefSeq" id="NP_004044.3">
    <property type="nucleotide sequence ID" value="NM_004053.3"/>
</dbReference>
<dbReference type="PDB" id="6G18">
    <property type="method" value="EM"/>
    <property type="resolution" value="3.60 A"/>
    <property type="chains" value="w=1-437"/>
</dbReference>
<dbReference type="PDB" id="6G4S">
    <property type="method" value="EM"/>
    <property type="resolution" value="4.00 A"/>
    <property type="chains" value="w=1-437"/>
</dbReference>
<dbReference type="PDB" id="6G4W">
    <property type="method" value="EM"/>
    <property type="resolution" value="4.50 A"/>
    <property type="chains" value="w=1-437"/>
</dbReference>
<dbReference type="PDB" id="7WTT">
    <property type="method" value="EM"/>
    <property type="resolution" value="3.10 A"/>
    <property type="chains" value="w=1-437"/>
</dbReference>
<dbReference type="PDB" id="7WTU">
    <property type="method" value="EM"/>
    <property type="resolution" value="3.00 A"/>
    <property type="chains" value="w=1-437"/>
</dbReference>
<dbReference type="PDB" id="7WTV">
    <property type="method" value="EM"/>
    <property type="resolution" value="3.50 A"/>
    <property type="chains" value="w=1-437"/>
</dbReference>
<dbReference type="PDB" id="7WTW">
    <property type="method" value="EM"/>
    <property type="resolution" value="3.20 A"/>
    <property type="chains" value="w=1-437"/>
</dbReference>
<dbReference type="PDB" id="7WTX">
    <property type="method" value="EM"/>
    <property type="resolution" value="3.10 A"/>
    <property type="chains" value="w=1-437"/>
</dbReference>
<dbReference type="PDB" id="7WTZ">
    <property type="method" value="EM"/>
    <property type="resolution" value="3.00 A"/>
    <property type="chains" value="w=1-437"/>
</dbReference>
<dbReference type="PDB" id="7WU0">
    <property type="method" value="EM"/>
    <property type="resolution" value="3.30 A"/>
    <property type="chains" value="w=1-437"/>
</dbReference>
<dbReference type="PDBsum" id="6G18"/>
<dbReference type="PDBsum" id="6G4S"/>
<dbReference type="PDBsum" id="6G4W"/>
<dbReference type="PDBsum" id="7WTT"/>
<dbReference type="PDBsum" id="7WTU"/>
<dbReference type="PDBsum" id="7WTV"/>
<dbReference type="PDBsum" id="7WTW"/>
<dbReference type="PDBsum" id="7WTX"/>
<dbReference type="PDBsum" id="7WTZ"/>
<dbReference type="PDBsum" id="7WU0"/>
<dbReference type="EMDB" id="EMD-23936"/>
<dbReference type="EMDB" id="EMD-23937"/>
<dbReference type="EMDB" id="EMD-23938"/>
<dbReference type="EMDB" id="EMD-32800"/>
<dbReference type="EMDB" id="EMD-32801"/>
<dbReference type="EMDB" id="EMD-32802"/>
<dbReference type="EMDB" id="EMD-32803"/>
<dbReference type="EMDB" id="EMD-32804"/>
<dbReference type="EMDB" id="EMD-32806"/>
<dbReference type="EMDB" id="EMD-32807"/>
<dbReference type="EMDB" id="EMD-4337"/>
<dbReference type="EMDB" id="EMD-4348"/>
<dbReference type="EMDB" id="EMD-4349"/>
<dbReference type="SMR" id="Q13895"/>
<dbReference type="BioGRID" id="107167">
    <property type="interactions" value="355"/>
</dbReference>
<dbReference type="DIP" id="DIP-50092N"/>
<dbReference type="FunCoup" id="Q13895">
    <property type="interactions" value="1836"/>
</dbReference>
<dbReference type="IntAct" id="Q13895">
    <property type="interactions" value="265"/>
</dbReference>
<dbReference type="MINT" id="Q13895"/>
<dbReference type="STRING" id="9606.ENSP00000230340"/>
<dbReference type="GlyGen" id="Q13895">
    <property type="glycosylation" value="1 site, 1 O-linked glycan (1 site)"/>
</dbReference>
<dbReference type="iPTMnet" id="Q13895"/>
<dbReference type="MetOSite" id="Q13895"/>
<dbReference type="PhosphoSitePlus" id="Q13895"/>
<dbReference type="SwissPalm" id="Q13895"/>
<dbReference type="BioMuta" id="BYSL"/>
<dbReference type="DMDM" id="108884834"/>
<dbReference type="jPOST" id="Q13895"/>
<dbReference type="MassIVE" id="Q13895"/>
<dbReference type="PaxDb" id="9606-ENSP00000230340"/>
<dbReference type="PeptideAtlas" id="Q13895"/>
<dbReference type="ProteomicsDB" id="59718"/>
<dbReference type="Pumba" id="Q13895"/>
<dbReference type="Antibodypedia" id="30110">
    <property type="antibodies" value="87 antibodies from 18 providers"/>
</dbReference>
<dbReference type="DNASU" id="705"/>
<dbReference type="Ensembl" id="ENST00000230340.9">
    <property type="protein sequence ID" value="ENSP00000230340.4"/>
    <property type="gene ID" value="ENSG00000112578.11"/>
</dbReference>
<dbReference type="Ensembl" id="ENST00000715726.2">
    <property type="protein sequence ID" value="ENSP00000520508.1"/>
    <property type="gene ID" value="ENSG00000112578.11"/>
</dbReference>
<dbReference type="GeneID" id="705"/>
<dbReference type="KEGG" id="hsa:705"/>
<dbReference type="MANE-Select" id="ENST00000230340.9">
    <property type="protein sequence ID" value="ENSP00000230340.4"/>
    <property type="RefSeq nucleotide sequence ID" value="NM_004053.4"/>
    <property type="RefSeq protein sequence ID" value="NP_004044.3"/>
</dbReference>
<dbReference type="UCSC" id="uc003orl.4">
    <property type="organism name" value="human"/>
</dbReference>
<dbReference type="AGR" id="HGNC:1157"/>
<dbReference type="CTD" id="705"/>
<dbReference type="DisGeNET" id="705"/>
<dbReference type="GeneCards" id="BYSL"/>
<dbReference type="HGNC" id="HGNC:1157">
    <property type="gene designation" value="BYSL"/>
</dbReference>
<dbReference type="HPA" id="ENSG00000112578">
    <property type="expression patterns" value="Low tissue specificity"/>
</dbReference>
<dbReference type="MIM" id="603871">
    <property type="type" value="gene"/>
</dbReference>
<dbReference type="neXtProt" id="NX_Q13895"/>
<dbReference type="OpenTargets" id="ENSG00000112578"/>
<dbReference type="PharmGKB" id="PA25472"/>
<dbReference type="VEuPathDB" id="HostDB:ENSG00000112578"/>
<dbReference type="eggNOG" id="KOG3871">
    <property type="taxonomic scope" value="Eukaryota"/>
</dbReference>
<dbReference type="GeneTree" id="ENSGT00390000007241"/>
<dbReference type="HOGENOM" id="CLU_029727_0_0_1"/>
<dbReference type="InParanoid" id="Q13895"/>
<dbReference type="OMA" id="TKLPVIW"/>
<dbReference type="OrthoDB" id="2192561at2759"/>
<dbReference type="PAN-GO" id="Q13895">
    <property type="GO annotations" value="5 GO annotations based on evolutionary models"/>
</dbReference>
<dbReference type="PhylomeDB" id="Q13895"/>
<dbReference type="TreeFam" id="TF312968"/>
<dbReference type="PathwayCommons" id="Q13895"/>
<dbReference type="Reactome" id="R-HSA-6791226">
    <property type="pathway name" value="Major pathway of rRNA processing in the nucleolus and cytosol"/>
</dbReference>
<dbReference type="SignaLink" id="Q13895"/>
<dbReference type="BioGRID-ORCS" id="705">
    <property type="hits" value="764 hits in 1162 CRISPR screens"/>
</dbReference>
<dbReference type="CD-CODE" id="232F8A39">
    <property type="entry name" value="P-body"/>
</dbReference>
<dbReference type="CD-CODE" id="91857CE7">
    <property type="entry name" value="Nucleolus"/>
</dbReference>
<dbReference type="ChiTaRS" id="BYSL">
    <property type="organism name" value="human"/>
</dbReference>
<dbReference type="GeneWiki" id="BYSL"/>
<dbReference type="GenomeRNAi" id="705"/>
<dbReference type="Pharos" id="Q13895">
    <property type="development level" value="Tbio"/>
</dbReference>
<dbReference type="PRO" id="PR:Q13895"/>
<dbReference type="Proteomes" id="UP000005640">
    <property type="component" value="Chromosome 6"/>
</dbReference>
<dbReference type="RNAct" id="Q13895">
    <property type="molecule type" value="protein"/>
</dbReference>
<dbReference type="Bgee" id="ENSG00000112578">
    <property type="expression patterns" value="Expressed in primordial germ cell in gonad and 120 other cell types or tissues"/>
</dbReference>
<dbReference type="ExpressionAtlas" id="Q13895">
    <property type="expression patterns" value="baseline and differential"/>
</dbReference>
<dbReference type="GO" id="GO:0045177">
    <property type="term" value="C:apical part of cell"/>
    <property type="evidence" value="ECO:0007669"/>
    <property type="project" value="Ensembl"/>
</dbReference>
<dbReference type="GO" id="GO:0005694">
    <property type="term" value="C:chromosome"/>
    <property type="evidence" value="ECO:0000314"/>
    <property type="project" value="HPA"/>
</dbReference>
<dbReference type="GO" id="GO:0005737">
    <property type="term" value="C:cytoplasm"/>
    <property type="evidence" value="ECO:0000318"/>
    <property type="project" value="GO_Central"/>
</dbReference>
<dbReference type="GO" id="GO:0005829">
    <property type="term" value="C:cytosol"/>
    <property type="evidence" value="ECO:0000304"/>
    <property type="project" value="Reactome"/>
</dbReference>
<dbReference type="GO" id="GO:0043231">
    <property type="term" value="C:intracellular membrane-bounded organelle"/>
    <property type="evidence" value="ECO:0000314"/>
    <property type="project" value="HPA"/>
</dbReference>
<dbReference type="GO" id="GO:0016020">
    <property type="term" value="C:membrane"/>
    <property type="evidence" value="ECO:0007005"/>
    <property type="project" value="UniProtKB"/>
</dbReference>
<dbReference type="GO" id="GO:0005730">
    <property type="term" value="C:nucleolus"/>
    <property type="evidence" value="ECO:0000314"/>
    <property type="project" value="UniProtKB"/>
</dbReference>
<dbReference type="GO" id="GO:0005654">
    <property type="term" value="C:nucleoplasm"/>
    <property type="evidence" value="ECO:0000314"/>
    <property type="project" value="HPA"/>
</dbReference>
<dbReference type="GO" id="GO:0030688">
    <property type="term" value="C:preribosome, small subunit precursor"/>
    <property type="evidence" value="ECO:0000318"/>
    <property type="project" value="GO_Central"/>
</dbReference>
<dbReference type="GO" id="GO:0003723">
    <property type="term" value="F:RNA binding"/>
    <property type="evidence" value="ECO:0007005"/>
    <property type="project" value="UniProtKB"/>
</dbReference>
<dbReference type="GO" id="GO:0030515">
    <property type="term" value="F:snoRNA binding"/>
    <property type="evidence" value="ECO:0000318"/>
    <property type="project" value="GO_Central"/>
</dbReference>
<dbReference type="GO" id="GO:0000462">
    <property type="term" value="P:maturation of SSU-rRNA from tricistronic rRNA transcript (SSU-rRNA, 5.8S rRNA, LSU-rRNA)"/>
    <property type="evidence" value="ECO:0007669"/>
    <property type="project" value="Ensembl"/>
</dbReference>
<dbReference type="GO" id="GO:1904749">
    <property type="term" value="P:regulation of protein localization to nucleolus"/>
    <property type="evidence" value="ECO:0000250"/>
    <property type="project" value="UniProtKB"/>
</dbReference>
<dbReference type="GO" id="GO:0042254">
    <property type="term" value="P:ribosome biogenesis"/>
    <property type="evidence" value="ECO:0000250"/>
    <property type="project" value="UniProtKB"/>
</dbReference>
<dbReference type="GO" id="GO:0006364">
    <property type="term" value="P:rRNA processing"/>
    <property type="evidence" value="ECO:0000318"/>
    <property type="project" value="GO_Central"/>
</dbReference>
<dbReference type="GO" id="GO:0072089">
    <property type="term" value="P:stem cell proliferation"/>
    <property type="evidence" value="ECO:0007669"/>
    <property type="project" value="Ensembl"/>
</dbReference>
<dbReference type="GO" id="GO:0001829">
    <property type="term" value="P:trophectodermal cell differentiation"/>
    <property type="evidence" value="ECO:0007669"/>
    <property type="project" value="Ensembl"/>
</dbReference>
<dbReference type="InterPro" id="IPR007955">
    <property type="entry name" value="Bystin"/>
</dbReference>
<dbReference type="PANTHER" id="PTHR12821">
    <property type="entry name" value="BYSTIN"/>
    <property type="match status" value="1"/>
</dbReference>
<dbReference type="PANTHER" id="PTHR12821:SF0">
    <property type="entry name" value="BYSTIN"/>
    <property type="match status" value="1"/>
</dbReference>
<dbReference type="Pfam" id="PF05291">
    <property type="entry name" value="Bystin"/>
    <property type="match status" value="1"/>
</dbReference>
<evidence type="ECO:0000256" key="1">
    <source>
        <dbReference type="SAM" id="MobiDB-lite"/>
    </source>
</evidence>
<evidence type="ECO:0000269" key="2">
    <source>
    </source>
</evidence>
<evidence type="ECO:0000269" key="3">
    <source>
    </source>
</evidence>
<evidence type="ECO:0000269" key="4">
    <source>
    </source>
</evidence>
<evidence type="ECO:0000303" key="5">
    <source>
    </source>
</evidence>
<evidence type="ECO:0000305" key="6"/>
<evidence type="ECO:0000312" key="7">
    <source>
        <dbReference type="HGNC" id="HGNC:1157"/>
    </source>
</evidence>
<evidence type="ECO:0007744" key="8">
    <source>
    </source>
</evidence>
<evidence type="ECO:0007744" key="9">
    <source>
    </source>
</evidence>
<evidence type="ECO:0007744" key="10">
    <source>
    </source>
</evidence>
<evidence type="ECO:0007744" key="11">
    <source>
    </source>
</evidence>
<evidence type="ECO:0007744" key="12">
    <source>
    </source>
</evidence>
<evidence type="ECO:0007744" key="13">
    <source>
    </source>
</evidence>
<evidence type="ECO:0007744" key="14">
    <source>
    </source>
</evidence>
<evidence type="ECO:0007744" key="15">
    <source>
    </source>
</evidence>
<evidence type="ECO:0007744" key="16">
    <source>
    </source>
</evidence>
<evidence type="ECO:0007829" key="17">
    <source>
        <dbReference type="PDB" id="7WTT"/>
    </source>
</evidence>
<evidence type="ECO:0007829" key="18">
    <source>
        <dbReference type="PDB" id="7WTU"/>
    </source>
</evidence>
<evidence type="ECO:0007829" key="19">
    <source>
        <dbReference type="PDB" id="7WTV"/>
    </source>
</evidence>
<evidence type="ECO:0007829" key="20">
    <source>
        <dbReference type="PDB" id="7WTZ"/>
    </source>
</evidence>
<proteinExistence type="evidence at protein level"/>
<name>BYST_HUMAN</name>
<gene>
    <name evidence="7" type="primary">BYSL</name>
    <name evidence="5" type="synonym">ENP1</name>
</gene>
<accession>Q13895</accession>
<accession>Q6P5W4</accession>
<accession>Q86W44</accession>
<accession>Q96IP8</accession>
<reference key="1">
    <citation type="journal article" date="2004" name="Genome Res.">
        <title>The status, quality, and expansion of the NIH full-length cDNA project: the Mammalian Gene Collection (MGC).</title>
        <authorList>
            <consortium name="The MGC Project Team"/>
        </authorList>
    </citation>
    <scope>NUCLEOTIDE SEQUENCE [LARGE SCALE MRNA]</scope>
    <source>
        <tissue>Lung</tissue>
        <tissue>Ovary</tissue>
        <tissue>Pancreas</tissue>
    </source>
</reference>
<reference key="2">
    <citation type="journal article" date="1998" name="Proc. Natl. Acad. Sci. U.S.A.">
        <title>A cytoplasmic protein, bystin, interacts with trophinin, tastin, and cytokeratin and may be involved in trophinin-mediated cell adhesion between trophoblast and endometrial epithelial cells.</title>
        <authorList>
            <person name="Suzuki N."/>
            <person name="Zara J."/>
            <person name="Sato T."/>
            <person name="Ong E."/>
            <person name="Bakhiet N."/>
            <person name="Oshima R.G."/>
            <person name="Watson K.L."/>
            <person name="Fukuda M.N."/>
        </authorList>
    </citation>
    <scope>NUCLEOTIDE SEQUENCE [MRNA] OF 131-437</scope>
    <source>
        <tissue>Choriocarcinoma</tissue>
    </source>
</reference>
<reference key="3">
    <citation type="submission" date="2001-07" db="EMBL/GenBank/DDBJ databases">
        <authorList>
            <person name="Fukuda M.N."/>
        </authorList>
    </citation>
    <scope>SEQUENCE REVISION</scope>
</reference>
<reference key="4">
    <citation type="journal article" date="2006" name="Cell">
        <title>Global, in vivo, and site-specific phosphorylation dynamics in signaling networks.</title>
        <authorList>
            <person name="Olsen J.V."/>
            <person name="Blagoev B."/>
            <person name="Gnad F."/>
            <person name="Macek B."/>
            <person name="Kumar C."/>
            <person name="Mortensen P."/>
            <person name="Mann M."/>
        </authorList>
    </citation>
    <scope>PHOSPHORYLATION [LARGE SCALE ANALYSIS] AT SER-98</scope>
    <scope>IDENTIFICATION BY MASS SPECTROMETRY [LARGE SCALE ANALYSIS]</scope>
    <source>
        <tissue>Cervix carcinoma</tissue>
    </source>
</reference>
<reference key="5">
    <citation type="journal article" date="2007" name="Biochem. J.">
        <title>Bystin in human cancer cells: intracellular localization and function in ribosome biogenesis.</title>
        <authorList>
            <person name="Miyoshi M."/>
            <person name="Okajima T."/>
            <person name="Matsuda T."/>
            <person name="Fukuda M.N."/>
            <person name="Nadano D."/>
        </authorList>
    </citation>
    <scope>FUNCTION</scope>
    <scope>SUBCELLULAR LOCATION</scope>
</reference>
<reference key="6">
    <citation type="journal article" date="2007" name="Proc. Natl. Acad. Sci. U.S.A.">
        <title>Trophoblast cell activation by trophinin ligation is implicated in human embryo implantation.</title>
        <authorList>
            <person name="Sugihara K."/>
            <person name="Sugiyama D."/>
            <person name="Byrne J."/>
            <person name="Wolf D.P."/>
            <person name="Lowitz K.P."/>
            <person name="Kobayashi Y."/>
            <person name="Kabir-Salmani M."/>
            <person name="Nadano D."/>
            <person name="Aoki D."/>
            <person name="Nozawa S."/>
            <person name="Nakayama J."/>
            <person name="Mustelin T."/>
            <person name="Ruoslahti E."/>
            <person name="Yamaguchi N."/>
            <person name="Fukuda M.N."/>
        </authorList>
    </citation>
    <scope>FUNCTION</scope>
</reference>
<reference key="7">
    <citation type="journal article" date="2008" name="Mol. Cell">
        <title>Kinase-selective enrichment enables quantitative phosphoproteomics of the kinome across the cell cycle.</title>
        <authorList>
            <person name="Daub H."/>
            <person name="Olsen J.V."/>
            <person name="Bairlein M."/>
            <person name="Gnad F."/>
            <person name="Oppermann F.S."/>
            <person name="Korner R."/>
            <person name="Greff Z."/>
            <person name="Keri G."/>
            <person name="Stemmann O."/>
            <person name="Mann M."/>
        </authorList>
    </citation>
    <scope>PHOSPHORYLATION [LARGE SCALE ANALYSIS] AT SER-98</scope>
    <scope>IDENTIFICATION BY MASS SPECTROMETRY [LARGE SCALE ANALYSIS]</scope>
    <source>
        <tissue>Cervix carcinoma</tissue>
    </source>
</reference>
<reference key="8">
    <citation type="journal article" date="2008" name="Proc. Natl. Acad. Sci. U.S.A.">
        <title>A quantitative atlas of mitotic phosphorylation.</title>
        <authorList>
            <person name="Dephoure N."/>
            <person name="Zhou C."/>
            <person name="Villen J."/>
            <person name="Beausoleil S.A."/>
            <person name="Bakalarski C.E."/>
            <person name="Elledge S.J."/>
            <person name="Gygi S.P."/>
        </authorList>
    </citation>
    <scope>PHOSPHORYLATION [LARGE SCALE ANALYSIS] AT SER-98</scope>
    <scope>IDENTIFICATION BY MASS SPECTROMETRY [LARGE SCALE ANALYSIS]</scope>
    <source>
        <tissue>Cervix carcinoma</tissue>
    </source>
</reference>
<reference key="9">
    <citation type="journal article" date="2008" name="Proteomics">
        <title>Large-scale phosphoproteome analysis of human liver tissue by enrichment and fractionation of phosphopeptides with strong anion exchange chromatography.</title>
        <authorList>
            <person name="Han G."/>
            <person name="Ye M."/>
            <person name="Zhou H."/>
            <person name="Jiang X."/>
            <person name="Feng S."/>
            <person name="Jiang X."/>
            <person name="Tian R."/>
            <person name="Wan D."/>
            <person name="Zou H."/>
            <person name="Gu J."/>
        </authorList>
    </citation>
    <scope>PHOSPHORYLATION [LARGE SCALE ANALYSIS] AT SER-98</scope>
    <scope>IDENTIFICATION BY MASS SPECTROMETRY [LARGE SCALE ANALYSIS]</scope>
    <source>
        <tissue>Liver</tissue>
    </source>
</reference>
<reference key="10">
    <citation type="journal article" date="2009" name="Anal. Chem.">
        <title>Lys-N and trypsin cover complementary parts of the phosphoproteome in a refined SCX-based approach.</title>
        <authorList>
            <person name="Gauci S."/>
            <person name="Helbig A.O."/>
            <person name="Slijper M."/>
            <person name="Krijgsveld J."/>
            <person name="Heck A.J."/>
            <person name="Mohammed S."/>
        </authorList>
    </citation>
    <scope>IDENTIFICATION BY MASS SPECTROMETRY [LARGE SCALE ANALYSIS]</scope>
</reference>
<reference key="11">
    <citation type="journal article" date="2009" name="Sci. Signal.">
        <title>Quantitative phosphoproteomic analysis of T cell receptor signaling reveals system-wide modulation of protein-protein interactions.</title>
        <authorList>
            <person name="Mayya V."/>
            <person name="Lundgren D.H."/>
            <person name="Hwang S.-I."/>
            <person name="Rezaul K."/>
            <person name="Wu L."/>
            <person name="Eng J.K."/>
            <person name="Rodionov V."/>
            <person name="Han D.K."/>
        </authorList>
    </citation>
    <scope>PHOSPHORYLATION [LARGE SCALE ANALYSIS] AT SER-98 AND SER-167</scope>
    <scope>IDENTIFICATION BY MASS SPECTROMETRY [LARGE SCALE ANALYSIS]</scope>
    <source>
        <tissue>Leukemic T-cell</tissue>
    </source>
</reference>
<reference key="12">
    <citation type="journal article" date="2010" name="Sci. Signal.">
        <title>Quantitative phosphoproteomics reveals widespread full phosphorylation site occupancy during mitosis.</title>
        <authorList>
            <person name="Olsen J.V."/>
            <person name="Vermeulen M."/>
            <person name="Santamaria A."/>
            <person name="Kumar C."/>
            <person name="Miller M.L."/>
            <person name="Jensen L.J."/>
            <person name="Gnad F."/>
            <person name="Cox J."/>
            <person name="Jensen T.S."/>
            <person name="Nigg E.A."/>
            <person name="Brunak S."/>
            <person name="Mann M."/>
        </authorList>
    </citation>
    <scope>PHOSPHORYLATION [LARGE SCALE ANALYSIS] AT SER-98</scope>
    <scope>IDENTIFICATION BY MASS SPECTROMETRY [LARGE SCALE ANALYSIS]</scope>
    <source>
        <tissue>Cervix carcinoma</tissue>
    </source>
</reference>
<reference key="13">
    <citation type="journal article" date="2011" name="BMC Syst. Biol.">
        <title>Initial characterization of the human central proteome.</title>
        <authorList>
            <person name="Burkard T.R."/>
            <person name="Planyavsky M."/>
            <person name="Kaupe I."/>
            <person name="Breitwieser F.P."/>
            <person name="Buerckstuemmer T."/>
            <person name="Bennett K.L."/>
            <person name="Superti-Furga G."/>
            <person name="Colinge J."/>
        </authorList>
    </citation>
    <scope>IDENTIFICATION BY MASS SPECTROMETRY [LARGE SCALE ANALYSIS]</scope>
</reference>
<reference key="14">
    <citation type="journal article" date="2011" name="Sci. Signal.">
        <title>System-wide temporal characterization of the proteome and phosphoproteome of human embryonic stem cell differentiation.</title>
        <authorList>
            <person name="Rigbolt K.T."/>
            <person name="Prokhorova T.A."/>
            <person name="Akimov V."/>
            <person name="Henningsen J."/>
            <person name="Johansen P.T."/>
            <person name="Kratchmarova I."/>
            <person name="Kassem M."/>
            <person name="Mann M."/>
            <person name="Olsen J.V."/>
            <person name="Blagoev B."/>
        </authorList>
    </citation>
    <scope>PHOSPHORYLATION [LARGE SCALE ANALYSIS] AT SER-98</scope>
    <scope>IDENTIFICATION BY MASS SPECTROMETRY [LARGE SCALE ANALYSIS]</scope>
</reference>
<reference key="15">
    <citation type="journal article" date="2013" name="J. Proteome Res.">
        <title>Toward a comprehensive characterization of a human cancer cell phosphoproteome.</title>
        <authorList>
            <person name="Zhou H."/>
            <person name="Di Palma S."/>
            <person name="Preisinger C."/>
            <person name="Peng M."/>
            <person name="Polat A.N."/>
            <person name="Heck A.J."/>
            <person name="Mohammed S."/>
        </authorList>
    </citation>
    <scope>PHOSPHORYLATION [LARGE SCALE ANALYSIS] AT SER-55; SER-98; THR-156 AND SER-414</scope>
    <scope>IDENTIFICATION BY MASS SPECTROMETRY [LARGE SCALE ANALYSIS]</scope>
    <source>
        <tissue>Cervix carcinoma</tissue>
        <tissue>Erythroleukemia</tissue>
    </source>
</reference>
<reference key="16">
    <citation type="journal article" date="2014" name="Mol. Cell. Proteomics">
        <title>Immunoaffinity enrichment and mass spectrometry analysis of protein methylation.</title>
        <authorList>
            <person name="Guo A."/>
            <person name="Gu H."/>
            <person name="Zhou J."/>
            <person name="Mulhern D."/>
            <person name="Wang Y."/>
            <person name="Lee K.A."/>
            <person name="Yang V."/>
            <person name="Aguiar M."/>
            <person name="Kornhauser J."/>
            <person name="Jia X."/>
            <person name="Ren J."/>
            <person name="Beausoleil S.A."/>
            <person name="Silva J.C."/>
            <person name="Vemulapalli V."/>
            <person name="Bedford M.T."/>
            <person name="Comb M.J."/>
        </authorList>
    </citation>
    <scope>METHYLATION [LARGE SCALE ANALYSIS] AT ARG-40</scope>
    <scope>IDENTIFICATION BY MASS SPECTROMETRY [LARGE SCALE ANALYSIS]</scope>
    <source>
        <tissue>Colon carcinoma</tissue>
    </source>
</reference>
<reference key="17">
    <citation type="journal article" date="2015" name="Cell Rep.">
        <title>Genome-wide RNAi Screening Identifies Protein Modules Required for 40S Subunit Synthesis in Human Cells.</title>
        <authorList>
            <person name="Badertscher L."/>
            <person name="Wild T."/>
            <person name="Montellese C."/>
            <person name="Alexander L.T."/>
            <person name="Bammert L."/>
            <person name="Sarazova M."/>
            <person name="Stebler M."/>
            <person name="Csucs G."/>
            <person name="Mayer T.U."/>
            <person name="Zamboni N."/>
            <person name="Zemp I."/>
            <person name="Horvath P."/>
            <person name="Kutay U."/>
        </authorList>
    </citation>
    <scope>SUBCELLULAR LOCATION</scope>
</reference>
<sequence length="437" mass="49601">MPKFKAARGVGGQEKHAPLADQILAGNAVRAGVREKRRGRGTGEAEEEYVGPRLSRRILQQARQQQEELEAEHGTGDKPAAPRERTTRLGPRMPQDGSDDEDEEWPTLEKAATMTAAGHHAEVVVDPEDERAIEMFMNKNPPARRTLADIIMEKLTEKQTEVETVMSEVSGFPMPQLDPRVLEVYRGVREVLSKYRSGKLPKAFKIIPALSNWEQILYVTEPEAWTAAAMYQATRIFASNLKERMAQRFYNLVLLPRVRDDVAEYKRLNFHLYMALKKALFKPGAWFKGILIPLCESGTCTLREAIIVGSIITKCSIPVLHSSAAMLKIAEMEYSGANSIFLRLLLDKKYALPYRVLDALVFHFLGFRTEKRELPVLWHQCLLTLVQRYKADLATDQKEALLELLRLQPHPQLSPEIRRELQSAVPRDVEDVPITVE</sequence>